<feature type="chain" id="PRO_0000287797" description="Probable ABC transporter permease protein NosY">
    <location>
        <begin position="1"/>
        <end position="275"/>
    </location>
</feature>
<feature type="transmembrane region" description="Helical" evidence="2">
    <location>
        <begin position="20"/>
        <end position="40"/>
    </location>
</feature>
<feature type="transmembrane region" description="Helical" evidence="2">
    <location>
        <begin position="60"/>
        <end position="80"/>
    </location>
</feature>
<feature type="transmembrane region" description="Helical" evidence="2">
    <location>
        <begin position="111"/>
        <end position="131"/>
    </location>
</feature>
<feature type="transmembrane region" description="Helical" evidence="2">
    <location>
        <begin position="146"/>
        <end position="166"/>
    </location>
</feature>
<feature type="transmembrane region" description="Helical" evidence="2">
    <location>
        <begin position="179"/>
        <end position="199"/>
    </location>
</feature>
<feature type="transmembrane region" description="Helical" evidence="2">
    <location>
        <begin position="250"/>
        <end position="270"/>
    </location>
</feature>
<name>NOSY_PSEAE</name>
<gene>
    <name type="primary">nosY</name>
    <name type="ordered locus">PA3395</name>
</gene>
<sequence length="275" mass="28695">MPVVWTIARKELADGLRNRWLLAISLLFALLSVGIAWFGAAAAGQVGFTSVPATVASLTSLATFLMPLIALLLAYDAIVGEEEGGTLLLLLTYPLGRGQLLLGKFLGHGLILALATLIGFGSAALAILALVPEVEAAILLGAFGRFMGSSLLLGCVFLALAYALSSRASEKSSAAGQALGLWFFFVLLFDLALLAILVLSQGHLSPRLLPWLLLLNPTDLYRLINLSGFDAAAAGGVVPLASDLPVSASALWLALALWAGAALALAHGLFRRRPI</sequence>
<dbReference type="EMBL" id="AE004091">
    <property type="protein sequence ID" value="AAG06783.1"/>
    <property type="molecule type" value="Genomic_DNA"/>
</dbReference>
<dbReference type="PIR" id="F83222">
    <property type="entry name" value="F83222"/>
</dbReference>
<dbReference type="RefSeq" id="NP_252085.1">
    <property type="nucleotide sequence ID" value="NC_002516.2"/>
</dbReference>
<dbReference type="RefSeq" id="WP_003113110.1">
    <property type="nucleotide sequence ID" value="NZ_QZGE01000017.1"/>
</dbReference>
<dbReference type="SMR" id="Q9HYK9"/>
<dbReference type="STRING" id="208964.PA3395"/>
<dbReference type="PaxDb" id="208964-PA3395"/>
<dbReference type="DNASU" id="879978"/>
<dbReference type="GeneID" id="879978"/>
<dbReference type="KEGG" id="pae:PA3395"/>
<dbReference type="PATRIC" id="fig|208964.12.peg.3554"/>
<dbReference type="PseudoCAP" id="PA3395"/>
<dbReference type="HOGENOM" id="CLU_071765_1_0_6"/>
<dbReference type="InParanoid" id="Q9HYK9"/>
<dbReference type="OrthoDB" id="9805862at2"/>
<dbReference type="PhylomeDB" id="Q9HYK9"/>
<dbReference type="BioCyc" id="PAER208964:G1FZ6-3461-MONOMER"/>
<dbReference type="Proteomes" id="UP000002438">
    <property type="component" value="Chromosome"/>
</dbReference>
<dbReference type="GO" id="GO:0005886">
    <property type="term" value="C:plasma membrane"/>
    <property type="evidence" value="ECO:0007669"/>
    <property type="project" value="UniProtKB-SubCell"/>
</dbReference>
<dbReference type="GO" id="GO:0140359">
    <property type="term" value="F:ABC-type transporter activity"/>
    <property type="evidence" value="ECO:0007669"/>
    <property type="project" value="InterPro"/>
</dbReference>
<dbReference type="InterPro" id="IPR032688">
    <property type="entry name" value="ABC2_NosY/YtrC-like"/>
</dbReference>
<dbReference type="PANTHER" id="PTHR43471">
    <property type="entry name" value="ABC TRANSPORTER PERMEASE"/>
    <property type="match status" value="1"/>
</dbReference>
<dbReference type="PANTHER" id="PTHR43471:SF1">
    <property type="entry name" value="ABC TRANSPORTER PERMEASE PROTEIN NOSY-RELATED"/>
    <property type="match status" value="1"/>
</dbReference>
<dbReference type="Pfam" id="PF12679">
    <property type="entry name" value="ABC2_membrane_2"/>
    <property type="match status" value="1"/>
</dbReference>
<organism>
    <name type="scientific">Pseudomonas aeruginosa (strain ATCC 15692 / DSM 22644 / CIP 104116 / JCM 14847 / LMG 12228 / 1C / PRS 101 / PAO1)</name>
    <dbReference type="NCBI Taxonomy" id="208964"/>
    <lineage>
        <taxon>Bacteria</taxon>
        <taxon>Pseudomonadati</taxon>
        <taxon>Pseudomonadota</taxon>
        <taxon>Gammaproteobacteria</taxon>
        <taxon>Pseudomonadales</taxon>
        <taxon>Pseudomonadaceae</taxon>
        <taxon>Pseudomonas</taxon>
    </lineage>
</organism>
<proteinExistence type="inferred from homology"/>
<accession>Q9HYK9</accession>
<keyword id="KW-0997">Cell inner membrane</keyword>
<keyword id="KW-1003">Cell membrane</keyword>
<keyword id="KW-0472">Membrane</keyword>
<keyword id="KW-1185">Reference proteome</keyword>
<keyword id="KW-0812">Transmembrane</keyword>
<keyword id="KW-1133">Transmembrane helix</keyword>
<keyword id="KW-0813">Transport</keyword>
<protein>
    <recommendedName>
        <fullName evidence="1">Probable ABC transporter permease protein NosY</fullName>
    </recommendedName>
</protein>
<reference key="1">
    <citation type="journal article" date="2000" name="Nature">
        <title>Complete genome sequence of Pseudomonas aeruginosa PAO1, an opportunistic pathogen.</title>
        <authorList>
            <person name="Stover C.K."/>
            <person name="Pham X.-Q.T."/>
            <person name="Erwin A.L."/>
            <person name="Mizoguchi S.D."/>
            <person name="Warrener P."/>
            <person name="Hickey M.J."/>
            <person name="Brinkman F.S.L."/>
            <person name="Hufnagle W.O."/>
            <person name="Kowalik D.J."/>
            <person name="Lagrou M."/>
            <person name="Garber R.L."/>
            <person name="Goltry L."/>
            <person name="Tolentino E."/>
            <person name="Westbrock-Wadman S."/>
            <person name="Yuan Y."/>
            <person name="Brody L.L."/>
            <person name="Coulter S.N."/>
            <person name="Folger K.R."/>
            <person name="Kas A."/>
            <person name="Larbig K."/>
            <person name="Lim R.M."/>
            <person name="Smith K.A."/>
            <person name="Spencer D.H."/>
            <person name="Wong G.K.-S."/>
            <person name="Wu Z."/>
            <person name="Paulsen I.T."/>
            <person name="Reizer J."/>
            <person name="Saier M.H. Jr."/>
            <person name="Hancock R.E.W."/>
            <person name="Lory S."/>
            <person name="Olson M.V."/>
        </authorList>
    </citation>
    <scope>NUCLEOTIDE SEQUENCE [LARGE SCALE GENOMIC DNA]</scope>
    <source>
        <strain>ATCC 15692 / DSM 22644 / CIP 104116 / JCM 14847 / LMG 12228 / 1C / PRS 101 / PAO1</strain>
    </source>
</reference>
<evidence type="ECO:0000250" key="1">
    <source>
        <dbReference type="UniProtKB" id="P19845"/>
    </source>
</evidence>
<evidence type="ECO:0000255" key="2"/>
<comment type="function">
    <text evidence="1">Required for the assembly of the copper chromophores of nitrous oxide reductase. Could be part of the ABC transporter complex NosDFY.</text>
</comment>
<comment type="subunit">
    <text evidence="1">The complex may be composed of an ATP-binding protein (NosF), a transmembrane protein (NosY) and a solute-binding protein (NosD).</text>
</comment>
<comment type="subcellular location">
    <subcellularLocation>
        <location evidence="1">Cell inner membrane</location>
        <topology evidence="2">Multi-pass membrane protein</topology>
    </subcellularLocation>
</comment>